<name>NRDR_DEHMB</name>
<keyword id="KW-0067">ATP-binding</keyword>
<keyword id="KW-0238">DNA-binding</keyword>
<keyword id="KW-0479">Metal-binding</keyword>
<keyword id="KW-0547">Nucleotide-binding</keyword>
<keyword id="KW-0678">Repressor</keyword>
<keyword id="KW-0804">Transcription</keyword>
<keyword id="KW-0805">Transcription regulation</keyword>
<keyword id="KW-0862">Zinc</keyword>
<keyword id="KW-0863">Zinc-finger</keyword>
<gene>
    <name evidence="1" type="primary">nrdR</name>
    <name type="ordered locus">DehaBAV1_0323</name>
</gene>
<reference key="1">
    <citation type="submission" date="2007-05" db="EMBL/GenBank/DDBJ databases">
        <title>Complete sequence of Dehalococcoides sp. BAV1.</title>
        <authorList>
            <consortium name="US DOE Joint Genome Institute"/>
            <person name="Copeland A."/>
            <person name="Lucas S."/>
            <person name="Lapidus A."/>
            <person name="Barry K."/>
            <person name="Detter J.C."/>
            <person name="Glavina del Rio T."/>
            <person name="Hammon N."/>
            <person name="Israni S."/>
            <person name="Pitluck S."/>
            <person name="Lowry S."/>
            <person name="Clum A."/>
            <person name="Schmutz J."/>
            <person name="Larimer F."/>
            <person name="Land M."/>
            <person name="Hauser L."/>
            <person name="Kyrpides N."/>
            <person name="Kim E."/>
            <person name="Ritalahti K.M."/>
            <person name="Loeffler F."/>
            <person name="Richardson P."/>
        </authorList>
    </citation>
    <scope>NUCLEOTIDE SEQUENCE [LARGE SCALE GENOMIC DNA]</scope>
    <source>
        <strain>ATCC BAA-2100 / JCM 16839 / KCTC 5957 / BAV1</strain>
    </source>
</reference>
<dbReference type="EMBL" id="CP000688">
    <property type="protein sequence ID" value="ABQ16909.1"/>
    <property type="molecule type" value="Genomic_DNA"/>
</dbReference>
<dbReference type="SMR" id="A5FSC0"/>
<dbReference type="KEGG" id="deb:DehaBAV1_0323"/>
<dbReference type="PATRIC" id="fig|216389.18.peg.362"/>
<dbReference type="HOGENOM" id="CLU_108412_0_0_0"/>
<dbReference type="GO" id="GO:0005524">
    <property type="term" value="F:ATP binding"/>
    <property type="evidence" value="ECO:0007669"/>
    <property type="project" value="UniProtKB-KW"/>
</dbReference>
<dbReference type="GO" id="GO:0003677">
    <property type="term" value="F:DNA binding"/>
    <property type="evidence" value="ECO:0007669"/>
    <property type="project" value="UniProtKB-KW"/>
</dbReference>
<dbReference type="GO" id="GO:0008270">
    <property type="term" value="F:zinc ion binding"/>
    <property type="evidence" value="ECO:0007669"/>
    <property type="project" value="UniProtKB-KW"/>
</dbReference>
<dbReference type="GO" id="GO:0045892">
    <property type="term" value="P:negative regulation of DNA-templated transcription"/>
    <property type="evidence" value="ECO:0007669"/>
    <property type="project" value="UniProtKB-UniRule"/>
</dbReference>
<dbReference type="HAMAP" id="MF_00440">
    <property type="entry name" value="NrdR"/>
    <property type="match status" value="1"/>
</dbReference>
<dbReference type="InterPro" id="IPR005144">
    <property type="entry name" value="ATP-cone_dom"/>
</dbReference>
<dbReference type="InterPro" id="IPR055173">
    <property type="entry name" value="NrdR-like_N"/>
</dbReference>
<dbReference type="InterPro" id="IPR003796">
    <property type="entry name" value="RNR_NrdR-like"/>
</dbReference>
<dbReference type="NCBIfam" id="TIGR00244">
    <property type="entry name" value="transcriptional regulator NrdR"/>
    <property type="match status" value="1"/>
</dbReference>
<dbReference type="PANTHER" id="PTHR30455">
    <property type="entry name" value="TRANSCRIPTIONAL REPRESSOR NRDR"/>
    <property type="match status" value="1"/>
</dbReference>
<dbReference type="PANTHER" id="PTHR30455:SF2">
    <property type="entry name" value="TRANSCRIPTIONAL REPRESSOR NRDR"/>
    <property type="match status" value="1"/>
</dbReference>
<dbReference type="Pfam" id="PF03477">
    <property type="entry name" value="ATP-cone"/>
    <property type="match status" value="1"/>
</dbReference>
<dbReference type="Pfam" id="PF22811">
    <property type="entry name" value="Zn_ribbon_NrdR"/>
    <property type="match status" value="1"/>
</dbReference>
<dbReference type="PROSITE" id="PS51161">
    <property type="entry name" value="ATP_CONE"/>
    <property type="match status" value="1"/>
</dbReference>
<proteinExistence type="inferred from homology"/>
<accession>A5FSC0</accession>
<sequence>MNCPYCSHPDSKVIDSRDVDDGVRRRRECVVCGQRFTTYERFQPAGLFVVKKDQRREEFNKEKLLSGLRRACEKRPLPAGAVDKVAGDIEAELYNMGKAEIPSTLLGDMVMERLKMLDNIAYVRFASVYREFTDITQLKKVVDNLVNGQDEGIHKGQLSLLPEDKAAPKTRYQRR</sequence>
<organism>
    <name type="scientific">Dehalococcoides mccartyi (strain ATCC BAA-2100 / JCM 16839 / KCTC 5957 / BAV1)</name>
    <dbReference type="NCBI Taxonomy" id="216389"/>
    <lineage>
        <taxon>Bacteria</taxon>
        <taxon>Bacillati</taxon>
        <taxon>Chloroflexota</taxon>
        <taxon>Dehalococcoidia</taxon>
        <taxon>Dehalococcoidales</taxon>
        <taxon>Dehalococcoidaceae</taxon>
        <taxon>Dehalococcoides</taxon>
    </lineage>
</organism>
<protein>
    <recommendedName>
        <fullName evidence="1">Transcriptional repressor NrdR</fullName>
    </recommendedName>
</protein>
<feature type="chain" id="PRO_1000080742" description="Transcriptional repressor NrdR">
    <location>
        <begin position="1"/>
        <end position="175"/>
    </location>
</feature>
<feature type="domain" description="ATP-cone" evidence="1">
    <location>
        <begin position="47"/>
        <end position="137"/>
    </location>
</feature>
<feature type="zinc finger region" evidence="1">
    <location>
        <begin position="3"/>
        <end position="32"/>
    </location>
</feature>
<evidence type="ECO:0000255" key="1">
    <source>
        <dbReference type="HAMAP-Rule" id="MF_00440"/>
    </source>
</evidence>
<comment type="function">
    <text evidence="1">Negatively regulates transcription of bacterial ribonucleotide reductase nrd genes and operons by binding to NrdR-boxes.</text>
</comment>
<comment type="cofactor">
    <cofactor evidence="1">
        <name>Zn(2+)</name>
        <dbReference type="ChEBI" id="CHEBI:29105"/>
    </cofactor>
    <text evidence="1">Binds 1 zinc ion.</text>
</comment>
<comment type="similarity">
    <text evidence="1">Belongs to the NrdR family.</text>
</comment>